<keyword id="KW-0997">Cell inner membrane</keyword>
<keyword id="KW-1003">Cell membrane</keyword>
<keyword id="KW-0472">Membrane</keyword>
<keyword id="KW-0812">Transmembrane</keyword>
<keyword id="KW-1133">Transmembrane helix</keyword>
<sequence length="47" mass="5552">MKKFRWVVLVVVVLACLLLWAQVFNMMCDQDVQFFSGICAINQFIPW</sequence>
<gene>
    <name evidence="1" type="primary">mgrB</name>
    <name type="ordered locus">ECDH10B_1964</name>
</gene>
<reference key="1">
    <citation type="journal article" date="2008" name="J. Bacteriol.">
        <title>The complete genome sequence of Escherichia coli DH10B: insights into the biology of a laboratory workhorse.</title>
        <authorList>
            <person name="Durfee T."/>
            <person name="Nelson R."/>
            <person name="Baldwin S."/>
            <person name="Plunkett G. III"/>
            <person name="Burland V."/>
            <person name="Mau B."/>
            <person name="Petrosino J.F."/>
            <person name="Qin X."/>
            <person name="Muzny D.M."/>
            <person name="Ayele M."/>
            <person name="Gibbs R.A."/>
            <person name="Csorgo B."/>
            <person name="Posfai G."/>
            <person name="Weinstock G.M."/>
            <person name="Blattner F.R."/>
        </authorList>
    </citation>
    <scope>NUCLEOTIDE SEQUENCE [LARGE SCALE GENOMIC DNA]</scope>
    <source>
        <strain>K12 / DH10B</strain>
    </source>
</reference>
<accession>B1XH93</accession>
<feature type="chain" id="PRO_1000201563" description="PhoP/PhoQ regulator MgrB">
    <location>
        <begin position="1"/>
        <end position="47"/>
    </location>
</feature>
<feature type="transmembrane region" description="Helical" evidence="1">
    <location>
        <begin position="6"/>
        <end position="26"/>
    </location>
</feature>
<proteinExistence type="inferred from homology"/>
<name>MGRB_ECODH</name>
<dbReference type="EMBL" id="CP000948">
    <property type="protein sequence ID" value="ACB03023.1"/>
    <property type="molecule type" value="Genomic_DNA"/>
</dbReference>
<dbReference type="RefSeq" id="WP_000714550.1">
    <property type="nucleotide sequence ID" value="NC_010473.1"/>
</dbReference>
<dbReference type="SMR" id="B1XH93"/>
<dbReference type="GeneID" id="93776075"/>
<dbReference type="KEGG" id="ecd:ECDH10B_1964"/>
<dbReference type="HOGENOM" id="CLU_208030_1_0_6"/>
<dbReference type="GO" id="GO:0005886">
    <property type="term" value="C:plasma membrane"/>
    <property type="evidence" value="ECO:0007669"/>
    <property type="project" value="UniProtKB-SubCell"/>
</dbReference>
<dbReference type="GO" id="GO:0070298">
    <property type="term" value="P:negative regulation of phosphorelay signal transduction system"/>
    <property type="evidence" value="ECO:0007669"/>
    <property type="project" value="UniProtKB-UniRule"/>
</dbReference>
<dbReference type="HAMAP" id="MF_01596">
    <property type="entry name" value="MgrB"/>
    <property type="match status" value="1"/>
</dbReference>
<dbReference type="InterPro" id="IPR020907">
    <property type="entry name" value="MgrB"/>
</dbReference>
<dbReference type="NCBIfam" id="NF007635">
    <property type="entry name" value="PRK10299.1"/>
    <property type="match status" value="1"/>
</dbReference>
<dbReference type="Pfam" id="PF13998">
    <property type="entry name" value="MgrB"/>
    <property type="match status" value="1"/>
</dbReference>
<dbReference type="PROSITE" id="PS51257">
    <property type="entry name" value="PROKAR_LIPOPROTEIN"/>
    <property type="match status" value="1"/>
</dbReference>
<evidence type="ECO:0000255" key="1">
    <source>
        <dbReference type="HAMAP-Rule" id="MF_01596"/>
    </source>
</evidence>
<comment type="function">
    <text evidence="1">PhoP-regulated transcription is redox-sensitive, being activated when the periplasm becomes more reducing. MgrB acts between DsbA/DsbB and PhoP/PhoQ in this pathway. Represses PhoP/PhoQ signaling, possibly by binding to the periplasmic domain of PhoQ, altering its activity and that of downstream effector PhoP.</text>
</comment>
<comment type="subunit">
    <text evidence="1">May form homooligomers. Probably interacts with the periplasmic domain of PhoQ.</text>
</comment>
<comment type="subcellular location">
    <subcellularLocation>
        <location evidence="1">Cell inner membrane</location>
        <topology evidence="1">Single-pass membrane protein</topology>
    </subcellularLocation>
</comment>
<comment type="similarity">
    <text evidence="1">Belongs to the MgrB family.</text>
</comment>
<organism>
    <name type="scientific">Escherichia coli (strain K12 / DH10B)</name>
    <dbReference type="NCBI Taxonomy" id="316385"/>
    <lineage>
        <taxon>Bacteria</taxon>
        <taxon>Pseudomonadati</taxon>
        <taxon>Pseudomonadota</taxon>
        <taxon>Gammaproteobacteria</taxon>
        <taxon>Enterobacterales</taxon>
        <taxon>Enterobacteriaceae</taxon>
        <taxon>Escherichia</taxon>
    </lineage>
</organism>
<protein>
    <recommendedName>
        <fullName evidence="1">PhoP/PhoQ regulator MgrB</fullName>
    </recommendedName>
</protein>